<organism>
    <name type="scientific">Rattus norvegicus</name>
    <name type="common">Rat</name>
    <dbReference type="NCBI Taxonomy" id="10116"/>
    <lineage>
        <taxon>Eukaryota</taxon>
        <taxon>Metazoa</taxon>
        <taxon>Chordata</taxon>
        <taxon>Craniata</taxon>
        <taxon>Vertebrata</taxon>
        <taxon>Euteleostomi</taxon>
        <taxon>Mammalia</taxon>
        <taxon>Eutheria</taxon>
        <taxon>Euarchontoglires</taxon>
        <taxon>Glires</taxon>
        <taxon>Rodentia</taxon>
        <taxon>Myomorpha</taxon>
        <taxon>Muroidea</taxon>
        <taxon>Muridae</taxon>
        <taxon>Murinae</taxon>
        <taxon>Rattus</taxon>
    </lineage>
</organism>
<gene>
    <name type="primary">Ncoa6</name>
    <name type="synonym">Aib3</name>
    <name type="synonym">Rap250</name>
    <name type="synonym">Trbp</name>
</gene>
<evidence type="ECO:0000250" key="1"/>
<evidence type="ECO:0000250" key="2">
    <source>
        <dbReference type="UniProtKB" id="Q14686"/>
    </source>
</evidence>
<evidence type="ECO:0000250" key="3">
    <source>
        <dbReference type="UniProtKB" id="Q9JL19"/>
    </source>
</evidence>
<evidence type="ECO:0000256" key="4">
    <source>
        <dbReference type="SAM" id="MobiDB-lite"/>
    </source>
</evidence>
<evidence type="ECO:0000269" key="5">
    <source>
    </source>
</evidence>
<reference key="1">
    <citation type="journal article" date="2000" name="Proc. Natl. Acad. Sci. U.S.A.">
        <title>Thyroid hormone receptor-binding protein, an LXXLL motif-containing protein, functions as a general coactivator.</title>
        <authorList>
            <person name="Ko L."/>
            <person name="Cardona G.R."/>
            <person name="Chin W.W."/>
        </authorList>
    </citation>
    <scope>NUCLEOTIDE SEQUENCE [MRNA] OF 1-285</scope>
    <scope>INTERACTION WITH THRB</scope>
    <source>
        <tissue>Pituitary</tissue>
    </source>
</reference>
<reference key="2">
    <citation type="journal article" date="2000" name="Mol. Cell. Biol.">
        <title>A new family of nuclear receptor coregulators that integrates nuclear receptor signaling through CBP.</title>
        <authorList>
            <person name="Mahajan M.A."/>
            <person name="Samuels H.H."/>
        </authorList>
    </citation>
    <scope>NUCLEOTIDE SEQUENCE [MRNA] OF 135-418</scope>
    <scope>INTERACTION WITH THRA; THRB; RAR; RXR; ESR; VDR; NR3C1</scope>
    <scope>MUTAGENESIS OF 174-LEU--LEU-178</scope>
    <source>
        <strain>Sprague-Dawley</strain>
        <tissue>Pituitary</tissue>
    </source>
</reference>
<protein>
    <recommendedName>
        <fullName>Nuclear receptor coactivator 6</fullName>
    </recommendedName>
    <alternativeName>
        <fullName>Activating signal cointegrator 2</fullName>
        <shortName>ASC-2</shortName>
    </alternativeName>
    <alternativeName>
        <fullName>Amplified in breast cancer protein 3</fullName>
    </alternativeName>
    <alternativeName>
        <fullName>Cancer-amplified transcriptional coactivator ASC-2</fullName>
    </alternativeName>
    <alternativeName>
        <fullName>Nuclear receptor coactivator RAP250</fullName>
        <shortName>NRC</shortName>
    </alternativeName>
    <alternativeName>
        <fullName>Nuclear receptor-activating protein, 250 kDa</fullName>
    </alternativeName>
    <alternativeName>
        <fullName>Peroxisome proliferator-activated receptor-interacting protein</fullName>
        <shortName>PPAR-interacting protein</shortName>
        <shortName>PRIP</shortName>
    </alternativeName>
    <alternativeName>
        <fullName>Thyroid hormone receptor-binding protein</fullName>
    </alternativeName>
</protein>
<comment type="function">
    <text evidence="1">Nuclear receptor coactivator that directly binds nuclear receptors and stimulates the transcriptional activities in a hormone-dependent fashion. Coactivate expression in an agonist- and AF2-dependent manner. May coactivate expression via a remodeling of chromatin and its interaction with histone acetyltransferase proteins. Involved in the coactivation of different nuclear receptors, such as for steroids (GR and ERs), retinoids (RARs and RXRs), thyroid hormone (TRs), vitamin D3 (VDR) and prostanoids (PPARs). Probably functions as a general coactivator, rather than just a nuclear receptor coactivator. May also be involved in the coactivation of the NF-kappa-B pathway (By similarity).</text>
</comment>
<comment type="subunit">
    <text evidence="1">Monomer and homodimer. Interacts in vitro with the basal transcription factors GTF2A and TBP, suggesting an autonomous transactivation function. Interacts with NCOA1, CRSP3, RBM14, the histone acetyltransferase proteins EP300 and CREBBP, and with methyltransferase proteins NCOA6IP and PRMT2 (By similarity). Component of the MLL2/3 complex (also named ASCOM complex), at least composed of KMT2D/MLL2 or KMT2C/MLL3, ASH2L, RBBP5, WDR5, NCOA6, DPY30, KDM6A, PAXIP1/PTIP, PAGR1 and alpha- and beta-tubulin (By similarity). Interacts with ZNF335; may enhance ligand-dependent transcriptional activation by nuclear hormone receptors (By similarity).</text>
</comment>
<comment type="interaction">
    <interactant intactId="EBI-286271">
        <id>Q9JLI4</id>
    </interactant>
    <interactant intactId="EBI-78473">
        <id>P03372</id>
        <label>ESR1</label>
    </interactant>
    <organismsDiffer>true</organismsDiffer>
    <experiments>2</experiments>
</comment>
<comment type="interaction">
    <interactant intactId="EBI-286271">
        <id>Q9JLI4</id>
    </interactant>
    <interactant intactId="EBI-286316">
        <id>P10912</id>
        <label>GHR</label>
    </interactant>
    <organismsDiffer>true</organismsDiffer>
    <experiments>2</experiments>
</comment>
<comment type="interaction">
    <interactant intactId="EBI-286271">
        <id>Q9JLI4</id>
    </interactant>
    <interactant intactId="EBI-78598">
        <id>P19793</id>
        <label>RXRA</label>
    </interactant>
    <organismsDiffer>true</organismsDiffer>
    <experiments>2</experiments>
</comment>
<comment type="interaction">
    <interactant intactId="EBI-286271">
        <id>Q9JLI4</id>
    </interactant>
    <interactant intactId="EBI-286285">
        <id>P10827</id>
        <label>THRA</label>
    </interactant>
    <organismsDiffer>true</organismsDiffer>
    <experiments>2</experiments>
</comment>
<comment type="interaction">
    <interactant intactId="EBI-286271">
        <id>Q9JLI4</id>
    </interactant>
    <interactant intactId="EBI-286357">
        <id>P11473</id>
        <label>VDR</label>
    </interactant>
    <organismsDiffer>true</organismsDiffer>
    <experiments>2</experiments>
</comment>
<comment type="subcellular location">
    <subcellularLocation>
        <location>Nucleus</location>
    </subcellularLocation>
</comment>
<comment type="domain">
    <text>Contains one Leu-Xaa-Xaa-Leu-Leu (LXXLL) motif, which is essential for the association with nuclear receptors.</text>
</comment>
<comment type="PTM">
    <text evidence="1">Phosphorylated.</text>
</comment>
<accession>Q9JLI4</accession>
<accession>Q9JIH6</accession>
<keyword id="KW-0010">Activator</keyword>
<keyword id="KW-0488">Methylation</keyword>
<keyword id="KW-0539">Nucleus</keyword>
<keyword id="KW-0597">Phosphoprotein</keyword>
<keyword id="KW-1185">Reference proteome</keyword>
<keyword id="KW-0804">Transcription</keyword>
<keyword id="KW-0805">Transcription regulation</keyword>
<proteinExistence type="evidence at protein level"/>
<feature type="chain" id="PRO_0000094415" description="Nuclear receptor coactivator 6">
    <location>
        <begin position="1" status="less than"/>
        <end position="418"/>
    </location>
</feature>
<feature type="region of interest" description="NCOA1-binding region" evidence="1">
    <location>
        <begin position="1" status="less than"/>
        <end position="418"/>
    </location>
</feature>
<feature type="region of interest" description="CREBBP-binding region" evidence="1">
    <location>
        <begin position="1" status="less than"/>
        <end position="352"/>
    </location>
</feature>
<feature type="region of interest" description="TBP/GTF2A-binding region" evidence="1">
    <location>
        <begin position="1" status="less than"/>
        <end position="215"/>
    </location>
</feature>
<feature type="region of interest" description="Disordered" evidence="4">
    <location>
        <begin position="1"/>
        <end position="21"/>
    </location>
</feature>
<feature type="region of interest" description="NCOA6IP-binding region" evidence="1">
    <location>
        <begin position="60"/>
        <end position="214"/>
    </location>
</feature>
<feature type="region of interest" description="Disordered" evidence="4">
    <location>
        <begin position="77"/>
        <end position="98"/>
    </location>
</feature>
<feature type="region of interest" description="Disordered" evidence="4">
    <location>
        <begin position="186"/>
        <end position="418"/>
    </location>
</feature>
<feature type="short sequence motif" description="LXXLL motif">
    <location>
        <begin position="174"/>
        <end position="178"/>
    </location>
</feature>
<feature type="compositionally biased region" description="Polar residues" evidence="4">
    <location>
        <begin position="84"/>
        <end position="98"/>
    </location>
</feature>
<feature type="compositionally biased region" description="Low complexity" evidence="4">
    <location>
        <begin position="190"/>
        <end position="199"/>
    </location>
</feature>
<feature type="compositionally biased region" description="Basic residues" evidence="4">
    <location>
        <begin position="200"/>
        <end position="212"/>
    </location>
</feature>
<feature type="compositionally biased region" description="Low complexity" evidence="4">
    <location>
        <begin position="269"/>
        <end position="279"/>
    </location>
</feature>
<feature type="compositionally biased region" description="Pro residues" evidence="4">
    <location>
        <begin position="282"/>
        <end position="310"/>
    </location>
</feature>
<feature type="compositionally biased region" description="Low complexity" evidence="4">
    <location>
        <begin position="311"/>
        <end position="336"/>
    </location>
</feature>
<feature type="compositionally biased region" description="Polar residues" evidence="4">
    <location>
        <begin position="358"/>
        <end position="370"/>
    </location>
</feature>
<feature type="compositionally biased region" description="Polar residues" evidence="4">
    <location>
        <begin position="399"/>
        <end position="418"/>
    </location>
</feature>
<feature type="modified residue" description="Phosphoserine" evidence="2">
    <location>
        <position position="171"/>
    </location>
</feature>
<feature type="modified residue" description="Asymmetric dimethylarginine" evidence="3">
    <location>
        <position position="342"/>
    </location>
</feature>
<feature type="modified residue" description="Asymmetric dimethylarginine" evidence="3">
    <location>
        <position position="353"/>
    </location>
</feature>
<feature type="modified residue" description="Asymmetric dimethylarginine" evidence="3">
    <location>
        <position position="391"/>
    </location>
</feature>
<feature type="mutagenesis site" description="Abolishes interaction with nuclear receptors." evidence="5">
    <original>LVNLL</original>
    <variation>AVNAA</variation>
    <location>
        <begin position="174"/>
        <end position="178"/>
    </location>
</feature>
<feature type="non-terminal residue">
    <location>
        <position position="1"/>
    </location>
</feature>
<sequence length="418" mass="45574">EQIMTNQMQGNKAQFNSQNQSNVMPGPAQIMRGPTPNMQGNMVQFTGQMSGQMLPQQGPVSNSPSQVMGIQGQVLRPPGPSPHMAQQHTDPATTANNDVNLSQMMPDVSMQQTSMVPPHVQSMQGNSASGSHFSGHGVSFNAPFGGAPNGTQMSCGQNPGFPVNKDVTLTSPLLVNLLQSDISAGHFGVNNKQNNTNANKQKKKKPPRKKKNCHQDLNTPDSRPAGLEEVDQQSLPGEQGINLDNTGPKLPDFSNRPPGYPTQPVEQRPLQQMPPQLMQHVAPPPQPPQQQPQPQLPQQQPQPQPPPPSQPQSQQQQQQQQQQQQQQMMMMLMMQQDPKSIRLPVSQNVHPPRGPLNPDSQRVPMQQSGNVPVMVSLQGPASVPPSPDKQRMPMPVNTPLGSNSRKMVYQESPQNSSS</sequence>
<name>NCOA6_RAT</name>
<dbReference type="EMBL" id="AF228043">
    <property type="protein sequence ID" value="AAF76422.1"/>
    <property type="molecule type" value="mRNA"/>
</dbReference>
<dbReference type="EMBL" id="AF176351">
    <property type="protein sequence ID" value="AAF71830.1"/>
    <property type="molecule type" value="mRNA"/>
</dbReference>
<dbReference type="SMR" id="Q9JLI4"/>
<dbReference type="IntAct" id="Q9JLI4">
    <property type="interactions" value="9"/>
</dbReference>
<dbReference type="STRING" id="10116.ENSRNOP00000024714"/>
<dbReference type="PhosphoSitePlus" id="Q9JLI4"/>
<dbReference type="PaxDb" id="10116-ENSRNOP00000024714"/>
<dbReference type="UCSC" id="RGD:620111">
    <property type="organism name" value="rat"/>
</dbReference>
<dbReference type="AGR" id="RGD:620111"/>
<dbReference type="RGD" id="620111">
    <property type="gene designation" value="Ncoa6"/>
</dbReference>
<dbReference type="eggNOG" id="ENOG502QQMS">
    <property type="taxonomic scope" value="Eukaryota"/>
</dbReference>
<dbReference type="InParanoid" id="Q9JLI4"/>
<dbReference type="Proteomes" id="UP000002494">
    <property type="component" value="Unplaced"/>
</dbReference>
<dbReference type="GO" id="GO:0035097">
    <property type="term" value="C:histone methyltransferase complex"/>
    <property type="evidence" value="ECO:0000266"/>
    <property type="project" value="RGD"/>
</dbReference>
<dbReference type="GO" id="GO:0044666">
    <property type="term" value="C:MLL3/4 complex"/>
    <property type="evidence" value="ECO:0000266"/>
    <property type="project" value="RGD"/>
</dbReference>
<dbReference type="GO" id="GO:0005634">
    <property type="term" value="C:nucleus"/>
    <property type="evidence" value="ECO:0000266"/>
    <property type="project" value="RGD"/>
</dbReference>
<dbReference type="GO" id="GO:0032991">
    <property type="term" value="C:protein-containing complex"/>
    <property type="evidence" value="ECO:0000314"/>
    <property type="project" value="RGD"/>
</dbReference>
<dbReference type="GO" id="GO:0005667">
    <property type="term" value="C:transcription regulator complex"/>
    <property type="evidence" value="ECO:0000266"/>
    <property type="project" value="RGD"/>
</dbReference>
<dbReference type="GO" id="GO:0003682">
    <property type="term" value="F:chromatin binding"/>
    <property type="evidence" value="ECO:0000266"/>
    <property type="project" value="RGD"/>
</dbReference>
<dbReference type="GO" id="GO:0140463">
    <property type="term" value="F:chromatin-protein adaptor activity"/>
    <property type="evidence" value="ECO:0000266"/>
    <property type="project" value="RGD"/>
</dbReference>
<dbReference type="GO" id="GO:0019899">
    <property type="term" value="F:enzyme binding"/>
    <property type="evidence" value="ECO:0000266"/>
    <property type="project" value="RGD"/>
</dbReference>
<dbReference type="GO" id="GO:1990226">
    <property type="term" value="F:histone methyltransferase binding"/>
    <property type="evidence" value="ECO:0000266"/>
    <property type="project" value="RGD"/>
</dbReference>
<dbReference type="GO" id="GO:0042802">
    <property type="term" value="F:identical protein binding"/>
    <property type="evidence" value="ECO:0000314"/>
    <property type="project" value="RGD"/>
</dbReference>
<dbReference type="GO" id="GO:0030331">
    <property type="term" value="F:nuclear estrogen receptor binding"/>
    <property type="evidence" value="ECO:0000353"/>
    <property type="project" value="RGD"/>
</dbReference>
<dbReference type="GO" id="GO:0035259">
    <property type="term" value="F:nuclear glucocorticoid receptor binding"/>
    <property type="evidence" value="ECO:0000353"/>
    <property type="project" value="RGD"/>
</dbReference>
<dbReference type="GO" id="GO:0042974">
    <property type="term" value="F:nuclear retinoic acid receptor binding"/>
    <property type="evidence" value="ECO:0000353"/>
    <property type="project" value="RGD"/>
</dbReference>
<dbReference type="GO" id="GO:0046965">
    <property type="term" value="F:nuclear retinoid X receptor binding"/>
    <property type="evidence" value="ECO:0000353"/>
    <property type="project" value="RGD"/>
</dbReference>
<dbReference type="GO" id="GO:0046966">
    <property type="term" value="F:nuclear thyroid hormone receptor binding"/>
    <property type="evidence" value="ECO:0000353"/>
    <property type="project" value="RGD"/>
</dbReference>
<dbReference type="GO" id="GO:0042809">
    <property type="term" value="F:nuclear vitamin D receptor binding"/>
    <property type="evidence" value="ECO:0000353"/>
    <property type="project" value="RGD"/>
</dbReference>
<dbReference type="GO" id="GO:0042975">
    <property type="term" value="F:peroxisome proliferator activated receptor binding"/>
    <property type="evidence" value="ECO:0000353"/>
    <property type="project" value="RGD"/>
</dbReference>
<dbReference type="GO" id="GO:0019904">
    <property type="term" value="F:protein domain specific binding"/>
    <property type="evidence" value="ECO:0000315"/>
    <property type="project" value="RGD"/>
</dbReference>
<dbReference type="GO" id="GO:0003713">
    <property type="term" value="F:transcription coactivator activity"/>
    <property type="evidence" value="ECO:0000266"/>
    <property type="project" value="RGD"/>
</dbReference>
<dbReference type="GO" id="GO:0007420">
    <property type="term" value="P:brain development"/>
    <property type="evidence" value="ECO:0000266"/>
    <property type="project" value="RGD"/>
</dbReference>
<dbReference type="GO" id="GO:0006974">
    <property type="term" value="P:DNA damage response"/>
    <property type="evidence" value="ECO:0000266"/>
    <property type="project" value="RGD"/>
</dbReference>
<dbReference type="GO" id="GO:0006352">
    <property type="term" value="P:DNA-templated transcription initiation"/>
    <property type="evidence" value="ECO:0000266"/>
    <property type="project" value="RGD"/>
</dbReference>
<dbReference type="GO" id="GO:0007507">
    <property type="term" value="P:heart development"/>
    <property type="evidence" value="ECO:0000266"/>
    <property type="project" value="RGD"/>
</dbReference>
<dbReference type="GO" id="GO:0060716">
    <property type="term" value="P:labyrinthine layer blood vessel development"/>
    <property type="evidence" value="ECO:0000266"/>
    <property type="project" value="RGD"/>
</dbReference>
<dbReference type="GO" id="GO:0030099">
    <property type="term" value="P:myeloid cell differentiation"/>
    <property type="evidence" value="ECO:0000250"/>
    <property type="project" value="UniProtKB"/>
</dbReference>
<dbReference type="GO" id="GO:0001541">
    <property type="term" value="P:ovarian follicle development"/>
    <property type="evidence" value="ECO:0000270"/>
    <property type="project" value="RGD"/>
</dbReference>
<dbReference type="GO" id="GO:0045893">
    <property type="term" value="P:positive regulation of DNA-templated transcription"/>
    <property type="evidence" value="ECO:0000266"/>
    <property type="project" value="RGD"/>
</dbReference>
<dbReference type="GO" id="GO:0035774">
    <property type="term" value="P:positive regulation of insulin secretion involved in cellular response to glucose stimulus"/>
    <property type="evidence" value="ECO:0000315"/>
    <property type="project" value="RGD"/>
</dbReference>
<dbReference type="GO" id="GO:0002793">
    <property type="term" value="P:positive regulation of peptide secretion"/>
    <property type="evidence" value="ECO:0000315"/>
    <property type="project" value="RGD"/>
</dbReference>
<dbReference type="GO" id="GO:0045944">
    <property type="term" value="P:positive regulation of transcription by RNA polymerase II"/>
    <property type="evidence" value="ECO:0000314"/>
    <property type="project" value="RGD"/>
</dbReference>
<dbReference type="GO" id="GO:0010468">
    <property type="term" value="P:regulation of gene expression"/>
    <property type="evidence" value="ECO:0000266"/>
    <property type="project" value="RGD"/>
</dbReference>
<dbReference type="InterPro" id="IPR026638">
    <property type="entry name" value="NCOA6"/>
</dbReference>
<dbReference type="PANTHER" id="PTHR15690">
    <property type="entry name" value="NUCLEAR RECEPTOR COACTIVATOR 6"/>
    <property type="match status" value="1"/>
</dbReference>
<dbReference type="PANTHER" id="PTHR15690:SF0">
    <property type="entry name" value="NUCLEAR RECEPTOR COACTIVATOR 6"/>
    <property type="match status" value="1"/>
</dbReference>